<feature type="chain" id="PRO_0000240545" description="Chorismate pyruvate-lyase">
    <location>
        <begin position="1"/>
        <end position="177"/>
    </location>
</feature>
<feature type="binding site" evidence="1">
    <location>
        <position position="36"/>
    </location>
    <ligand>
        <name>substrate</name>
    </ligand>
</feature>
<feature type="binding site" evidence="1">
    <location>
        <position position="78"/>
    </location>
    <ligand>
        <name>substrate</name>
    </ligand>
</feature>
<feature type="binding site" evidence="1">
    <location>
        <position position="116"/>
    </location>
    <ligand>
        <name>substrate</name>
    </ligand>
</feature>
<feature type="binding site" evidence="1">
    <location>
        <position position="157"/>
    </location>
    <ligand>
        <name>substrate</name>
    </ligand>
</feature>
<accession>Q6D9I9</accession>
<keyword id="KW-0963">Cytoplasm</keyword>
<keyword id="KW-0456">Lyase</keyword>
<keyword id="KW-0670">Pyruvate</keyword>
<keyword id="KW-1185">Reference proteome</keyword>
<keyword id="KW-0831">Ubiquinone biosynthesis</keyword>
<protein>
    <recommendedName>
        <fullName evidence="1">Chorismate pyruvate-lyase</fullName>
        <shortName evidence="1">CL</shortName>
        <shortName evidence="1">CPL</shortName>
        <ecNumber evidence="1">4.1.3.40</ecNumber>
    </recommendedName>
</protein>
<sequence>MSDDASTLLRTISWFTEPPSVLPEHIGDWLMETSSMTQRLEKYCAQLRVTLCREGFITPQMLGEERDQLPADERYWLREVVLYGDDRPWLFGRTIVPQQTLEGSGAALTKIGNQPLGRYLFEQKSLTRDYIHTGCCEGLWARRSRLCLSGHPLLLTELFLPESPVYYTPGDEGWQVI</sequence>
<gene>
    <name evidence="1" type="primary">ubiC</name>
    <name type="ordered locus">ECA0626</name>
</gene>
<comment type="function">
    <text evidence="1">Removes the pyruvyl group from chorismate, with concomitant aromatization of the ring, to provide 4-hydroxybenzoate (4HB) for the ubiquinone pathway.</text>
</comment>
<comment type="catalytic activity">
    <reaction evidence="1">
        <text>chorismate = 4-hydroxybenzoate + pyruvate</text>
        <dbReference type="Rhea" id="RHEA:16505"/>
        <dbReference type="ChEBI" id="CHEBI:15361"/>
        <dbReference type="ChEBI" id="CHEBI:17879"/>
        <dbReference type="ChEBI" id="CHEBI:29748"/>
        <dbReference type="EC" id="4.1.3.40"/>
    </reaction>
</comment>
<comment type="pathway">
    <text evidence="1">Cofactor biosynthesis; ubiquinone biosynthesis.</text>
</comment>
<comment type="subunit">
    <text evidence="1">Monomer.</text>
</comment>
<comment type="subcellular location">
    <subcellularLocation>
        <location evidence="1">Cytoplasm</location>
    </subcellularLocation>
</comment>
<comment type="similarity">
    <text evidence="1">Belongs to the UbiC family.</text>
</comment>
<dbReference type="EC" id="4.1.3.40" evidence="1"/>
<dbReference type="EMBL" id="BX950851">
    <property type="protein sequence ID" value="CAG73541.1"/>
    <property type="molecule type" value="Genomic_DNA"/>
</dbReference>
<dbReference type="RefSeq" id="WP_011092244.1">
    <property type="nucleotide sequence ID" value="NC_004547.2"/>
</dbReference>
<dbReference type="SMR" id="Q6D9I9"/>
<dbReference type="STRING" id="218491.ECA0626"/>
<dbReference type="GeneID" id="57207375"/>
<dbReference type="KEGG" id="eca:ECA0626"/>
<dbReference type="PATRIC" id="fig|218491.5.peg.621"/>
<dbReference type="eggNOG" id="COG3161">
    <property type="taxonomic scope" value="Bacteria"/>
</dbReference>
<dbReference type="HOGENOM" id="CLU_096824_1_0_6"/>
<dbReference type="OrthoDB" id="9789493at2"/>
<dbReference type="UniPathway" id="UPA00232"/>
<dbReference type="Proteomes" id="UP000007966">
    <property type="component" value="Chromosome"/>
</dbReference>
<dbReference type="GO" id="GO:0005829">
    <property type="term" value="C:cytosol"/>
    <property type="evidence" value="ECO:0007669"/>
    <property type="project" value="TreeGrafter"/>
</dbReference>
<dbReference type="GO" id="GO:0008813">
    <property type="term" value="F:chorismate lyase activity"/>
    <property type="evidence" value="ECO:0007669"/>
    <property type="project" value="UniProtKB-UniRule"/>
</dbReference>
<dbReference type="GO" id="GO:0042866">
    <property type="term" value="P:pyruvate biosynthetic process"/>
    <property type="evidence" value="ECO:0007669"/>
    <property type="project" value="UniProtKB-UniRule"/>
</dbReference>
<dbReference type="GO" id="GO:0006744">
    <property type="term" value="P:ubiquinone biosynthetic process"/>
    <property type="evidence" value="ECO:0007669"/>
    <property type="project" value="UniProtKB-UniRule"/>
</dbReference>
<dbReference type="Gene3D" id="3.40.1410.10">
    <property type="entry name" value="Chorismate lyase-like"/>
    <property type="match status" value="1"/>
</dbReference>
<dbReference type="HAMAP" id="MF_01632">
    <property type="entry name" value="UbiC"/>
    <property type="match status" value="1"/>
</dbReference>
<dbReference type="InterPro" id="IPR007440">
    <property type="entry name" value="Chorismate--pyruvate_lyase"/>
</dbReference>
<dbReference type="InterPro" id="IPR028978">
    <property type="entry name" value="Chorismate_lyase_/UTRA_dom_sf"/>
</dbReference>
<dbReference type="NCBIfam" id="NF008656">
    <property type="entry name" value="PRK11655.1"/>
    <property type="match status" value="1"/>
</dbReference>
<dbReference type="PANTHER" id="PTHR38683">
    <property type="entry name" value="CHORISMATE PYRUVATE-LYASE"/>
    <property type="match status" value="1"/>
</dbReference>
<dbReference type="PANTHER" id="PTHR38683:SF1">
    <property type="entry name" value="CHORISMATE PYRUVATE-LYASE"/>
    <property type="match status" value="1"/>
</dbReference>
<dbReference type="Pfam" id="PF04345">
    <property type="entry name" value="Chor_lyase"/>
    <property type="match status" value="1"/>
</dbReference>
<dbReference type="SUPFAM" id="SSF64288">
    <property type="entry name" value="Chorismate lyase-like"/>
    <property type="match status" value="1"/>
</dbReference>
<evidence type="ECO:0000255" key="1">
    <source>
        <dbReference type="HAMAP-Rule" id="MF_01632"/>
    </source>
</evidence>
<name>UBIC_PECAS</name>
<proteinExistence type="inferred from homology"/>
<organism>
    <name type="scientific">Pectobacterium atrosepticum (strain SCRI 1043 / ATCC BAA-672)</name>
    <name type="common">Erwinia carotovora subsp. atroseptica</name>
    <dbReference type="NCBI Taxonomy" id="218491"/>
    <lineage>
        <taxon>Bacteria</taxon>
        <taxon>Pseudomonadati</taxon>
        <taxon>Pseudomonadota</taxon>
        <taxon>Gammaproteobacteria</taxon>
        <taxon>Enterobacterales</taxon>
        <taxon>Pectobacteriaceae</taxon>
        <taxon>Pectobacterium</taxon>
    </lineage>
</organism>
<reference key="1">
    <citation type="journal article" date="2004" name="Proc. Natl. Acad. Sci. U.S.A.">
        <title>Genome sequence of the enterobacterial phytopathogen Erwinia carotovora subsp. atroseptica and characterization of virulence factors.</title>
        <authorList>
            <person name="Bell K.S."/>
            <person name="Sebaihia M."/>
            <person name="Pritchard L."/>
            <person name="Holden M.T.G."/>
            <person name="Hyman L.J."/>
            <person name="Holeva M.C."/>
            <person name="Thomson N.R."/>
            <person name="Bentley S.D."/>
            <person name="Churcher L.J.C."/>
            <person name="Mungall K."/>
            <person name="Atkin R."/>
            <person name="Bason N."/>
            <person name="Brooks K."/>
            <person name="Chillingworth T."/>
            <person name="Clark K."/>
            <person name="Doggett J."/>
            <person name="Fraser A."/>
            <person name="Hance Z."/>
            <person name="Hauser H."/>
            <person name="Jagels K."/>
            <person name="Moule S."/>
            <person name="Norbertczak H."/>
            <person name="Ormond D."/>
            <person name="Price C."/>
            <person name="Quail M.A."/>
            <person name="Sanders M."/>
            <person name="Walker D."/>
            <person name="Whitehead S."/>
            <person name="Salmond G.P.C."/>
            <person name="Birch P.R.J."/>
            <person name="Parkhill J."/>
            <person name="Toth I.K."/>
        </authorList>
    </citation>
    <scope>NUCLEOTIDE SEQUENCE [LARGE SCALE GENOMIC DNA]</scope>
    <source>
        <strain>SCRI 1043 / ATCC BAA-672</strain>
    </source>
</reference>